<keyword id="KW-0050">Antiport</keyword>
<keyword id="KW-0112">Calmodulin-binding</keyword>
<keyword id="KW-1003">Cell membrane</keyword>
<keyword id="KW-0325">Glycoprotein</keyword>
<keyword id="KW-0406">Ion transport</keyword>
<keyword id="KW-0449">Lipoprotein</keyword>
<keyword id="KW-0472">Membrane</keyword>
<keyword id="KW-0564">Palmitate</keyword>
<keyword id="KW-0597">Phosphoprotein</keyword>
<keyword id="KW-1185">Reference proteome</keyword>
<keyword id="KW-0915">Sodium</keyword>
<keyword id="KW-0739">Sodium transport</keyword>
<keyword id="KW-0812">Transmembrane</keyword>
<keyword id="KW-1133">Transmembrane helix</keyword>
<keyword id="KW-0813">Transport</keyword>
<keyword id="KW-0832">Ubl conjugation</keyword>
<dbReference type="EMBL" id="NKLS02000002">
    <property type="status" value="NOT_ANNOTATED_CDS"/>
    <property type="molecule type" value="Genomic_DNA"/>
</dbReference>
<dbReference type="EMBL" id="U49432">
    <property type="protein sequence ID" value="AAA91483.1"/>
    <property type="molecule type" value="mRNA"/>
</dbReference>
<dbReference type="RefSeq" id="NP_777258.2">
    <property type="nucleotide sequence ID" value="NM_174833.3"/>
</dbReference>
<dbReference type="BMRB" id="Q28036"/>
<dbReference type="SMR" id="Q28036"/>
<dbReference type="FunCoup" id="Q28036">
    <property type="interactions" value="876"/>
</dbReference>
<dbReference type="STRING" id="9913.ENSBTAP00000048292"/>
<dbReference type="GlyCosmos" id="Q28036">
    <property type="glycosylation" value="2 sites, No reported glycans"/>
</dbReference>
<dbReference type="GlyGen" id="Q28036">
    <property type="glycosylation" value="1 site"/>
</dbReference>
<dbReference type="PaxDb" id="9913-ENSBTAP00000048292"/>
<dbReference type="Ensembl" id="ENSBTAT00000055788.3">
    <property type="protein sequence ID" value="ENSBTAP00000048292.2"/>
    <property type="gene ID" value="ENSBTAG00000008766.7"/>
</dbReference>
<dbReference type="GeneID" id="317654"/>
<dbReference type="KEGG" id="bta:317654"/>
<dbReference type="CTD" id="6548"/>
<dbReference type="VEuPathDB" id="HostDB:ENSBTAG00000008766"/>
<dbReference type="eggNOG" id="KOG1966">
    <property type="taxonomic scope" value="Eukaryota"/>
</dbReference>
<dbReference type="GeneTree" id="ENSGT00940000156338"/>
<dbReference type="HOGENOM" id="CLU_005912_4_1_1"/>
<dbReference type="InParanoid" id="Q28036"/>
<dbReference type="OMA" id="TIMTYAV"/>
<dbReference type="OrthoDB" id="196264at2759"/>
<dbReference type="TreeFam" id="TF317212"/>
<dbReference type="Reactome" id="R-BTA-2160916">
    <property type="pathway name" value="Hyaluronan uptake and degradation"/>
</dbReference>
<dbReference type="Reactome" id="R-BTA-425986">
    <property type="pathway name" value="Sodium/Proton exchangers"/>
</dbReference>
<dbReference type="Proteomes" id="UP000009136">
    <property type="component" value="Chromosome 2"/>
</dbReference>
<dbReference type="Bgee" id="ENSBTAG00000008766">
    <property type="expression patterns" value="Expressed in abomasum and 103 other cell types or tissues"/>
</dbReference>
<dbReference type="GO" id="GO:0016324">
    <property type="term" value="C:apical plasma membrane"/>
    <property type="evidence" value="ECO:0007669"/>
    <property type="project" value="Ensembl"/>
</dbReference>
<dbReference type="GO" id="GO:0016323">
    <property type="term" value="C:basolateral plasma membrane"/>
    <property type="evidence" value="ECO:0000250"/>
    <property type="project" value="UniProtKB"/>
</dbReference>
<dbReference type="GO" id="GO:0090533">
    <property type="term" value="C:cation-transporting ATPase complex"/>
    <property type="evidence" value="ECO:0007669"/>
    <property type="project" value="Ensembl"/>
</dbReference>
<dbReference type="GO" id="GO:0005737">
    <property type="term" value="C:cytoplasm"/>
    <property type="evidence" value="ECO:0000250"/>
    <property type="project" value="UniProtKB"/>
</dbReference>
<dbReference type="GO" id="GO:0045121">
    <property type="term" value="C:membrane raft"/>
    <property type="evidence" value="ECO:0007669"/>
    <property type="project" value="Ensembl"/>
</dbReference>
<dbReference type="GO" id="GO:0005654">
    <property type="term" value="C:nucleoplasm"/>
    <property type="evidence" value="ECO:0007669"/>
    <property type="project" value="Ensembl"/>
</dbReference>
<dbReference type="GO" id="GO:0005886">
    <property type="term" value="C:plasma membrane"/>
    <property type="evidence" value="ECO:0000250"/>
    <property type="project" value="UniProtKB"/>
</dbReference>
<dbReference type="GO" id="GO:0048306">
    <property type="term" value="F:calcium-dependent protein binding"/>
    <property type="evidence" value="ECO:0000250"/>
    <property type="project" value="UniProtKB"/>
</dbReference>
<dbReference type="GO" id="GO:0005516">
    <property type="term" value="F:calmodulin binding"/>
    <property type="evidence" value="ECO:0007669"/>
    <property type="project" value="UniProtKB-KW"/>
</dbReference>
<dbReference type="GO" id="GO:0042802">
    <property type="term" value="F:identical protein binding"/>
    <property type="evidence" value="ECO:0007669"/>
    <property type="project" value="Ensembl"/>
</dbReference>
<dbReference type="GO" id="GO:0005543">
    <property type="term" value="F:phospholipid binding"/>
    <property type="evidence" value="ECO:0007669"/>
    <property type="project" value="Ensembl"/>
</dbReference>
<dbReference type="GO" id="GO:0015386">
    <property type="term" value="F:potassium:proton antiporter activity"/>
    <property type="evidence" value="ECO:0000318"/>
    <property type="project" value="GO_Central"/>
</dbReference>
<dbReference type="GO" id="GO:0030346">
    <property type="term" value="F:protein phosphatase 2B binding"/>
    <property type="evidence" value="ECO:0007669"/>
    <property type="project" value="Ensembl"/>
</dbReference>
<dbReference type="GO" id="GO:0015385">
    <property type="term" value="F:sodium:proton antiporter activity"/>
    <property type="evidence" value="ECO:0000250"/>
    <property type="project" value="UniProtKB"/>
</dbReference>
<dbReference type="GO" id="GO:0055007">
    <property type="term" value="P:cardiac muscle cell differentiation"/>
    <property type="evidence" value="ECO:0007669"/>
    <property type="project" value="Ensembl"/>
</dbReference>
<dbReference type="GO" id="GO:0071468">
    <property type="term" value="P:cellular response to acidic pH"/>
    <property type="evidence" value="ECO:0000250"/>
    <property type="project" value="UniProtKB"/>
</dbReference>
<dbReference type="GO" id="GO:0071872">
    <property type="term" value="P:cellular response to epinephrine stimulus"/>
    <property type="evidence" value="ECO:0007669"/>
    <property type="project" value="Ensembl"/>
</dbReference>
<dbReference type="GO" id="GO:0006883">
    <property type="term" value="P:intracellular sodium ion homeostasis"/>
    <property type="evidence" value="ECO:0007669"/>
    <property type="project" value="Ensembl"/>
</dbReference>
<dbReference type="GO" id="GO:0070886">
    <property type="term" value="P:positive regulation of calcineurin-NFAT signaling cascade"/>
    <property type="evidence" value="ECO:0007669"/>
    <property type="project" value="Ensembl"/>
</dbReference>
<dbReference type="GO" id="GO:0010613">
    <property type="term" value="P:positive regulation of cardiac muscle hypertrophy"/>
    <property type="evidence" value="ECO:0007669"/>
    <property type="project" value="Ensembl"/>
</dbReference>
<dbReference type="GO" id="GO:0098735">
    <property type="term" value="P:positive regulation of the force of heart contraction"/>
    <property type="evidence" value="ECO:0007669"/>
    <property type="project" value="Ensembl"/>
</dbReference>
<dbReference type="GO" id="GO:0045944">
    <property type="term" value="P:positive regulation of transcription by RNA polymerase II"/>
    <property type="evidence" value="ECO:0007669"/>
    <property type="project" value="Ensembl"/>
</dbReference>
<dbReference type="GO" id="GO:0071805">
    <property type="term" value="P:potassium ion transmembrane transport"/>
    <property type="evidence" value="ECO:0000318"/>
    <property type="project" value="GO_Central"/>
</dbReference>
<dbReference type="GO" id="GO:0051259">
    <property type="term" value="P:protein complex oligomerization"/>
    <property type="evidence" value="ECO:0000250"/>
    <property type="project" value="UniProtKB"/>
</dbReference>
<dbReference type="GO" id="GO:0010882">
    <property type="term" value="P:regulation of cardiac muscle contraction by calcium ion signaling"/>
    <property type="evidence" value="ECO:0007669"/>
    <property type="project" value="Ensembl"/>
</dbReference>
<dbReference type="GO" id="GO:0051453">
    <property type="term" value="P:regulation of intracellular pH"/>
    <property type="evidence" value="ECO:0000250"/>
    <property type="project" value="UniProtKB"/>
</dbReference>
<dbReference type="GO" id="GO:0006885">
    <property type="term" value="P:regulation of pH"/>
    <property type="evidence" value="ECO:0000250"/>
    <property type="project" value="UniProtKB"/>
</dbReference>
<dbReference type="GO" id="GO:0086092">
    <property type="term" value="P:regulation of the force of heart contraction by cardiac conduction"/>
    <property type="evidence" value="ECO:0007669"/>
    <property type="project" value="Ensembl"/>
</dbReference>
<dbReference type="GO" id="GO:0010447">
    <property type="term" value="P:response to acidic pH"/>
    <property type="evidence" value="ECO:0000250"/>
    <property type="project" value="UniProtKB"/>
</dbReference>
<dbReference type="GO" id="GO:0035994">
    <property type="term" value="P:response to muscle stretch"/>
    <property type="evidence" value="ECO:0007669"/>
    <property type="project" value="Ensembl"/>
</dbReference>
<dbReference type="GO" id="GO:0036376">
    <property type="term" value="P:sodium ion export across plasma membrane"/>
    <property type="evidence" value="ECO:0000250"/>
    <property type="project" value="UniProtKB"/>
</dbReference>
<dbReference type="GO" id="GO:0098719">
    <property type="term" value="P:sodium ion import across plasma membrane"/>
    <property type="evidence" value="ECO:0000318"/>
    <property type="project" value="GO_Central"/>
</dbReference>
<dbReference type="GO" id="GO:0048863">
    <property type="term" value="P:stem cell differentiation"/>
    <property type="evidence" value="ECO:0007669"/>
    <property type="project" value="Ensembl"/>
</dbReference>
<dbReference type="Gene3D" id="6.10.140.1330">
    <property type="match status" value="1"/>
</dbReference>
<dbReference type="Gene3D" id="6.10.250.1040">
    <property type="match status" value="1"/>
</dbReference>
<dbReference type="Gene3D" id="6.10.250.2020">
    <property type="match status" value="1"/>
</dbReference>
<dbReference type="InterPro" id="IPR018422">
    <property type="entry name" value="Cation/H_exchanger_CPA1"/>
</dbReference>
<dbReference type="InterPro" id="IPR006153">
    <property type="entry name" value="Cation/H_exchanger_TM"/>
</dbReference>
<dbReference type="InterPro" id="IPR004709">
    <property type="entry name" value="NaH_exchanger"/>
</dbReference>
<dbReference type="InterPro" id="IPR001970">
    <property type="entry name" value="NHE-1-like"/>
</dbReference>
<dbReference type="InterPro" id="IPR032103">
    <property type="entry name" value="NHE_CaM-bd"/>
</dbReference>
<dbReference type="NCBIfam" id="TIGR00840">
    <property type="entry name" value="b_cpa1"/>
    <property type="match status" value="1"/>
</dbReference>
<dbReference type="PANTHER" id="PTHR10110">
    <property type="entry name" value="SODIUM/HYDROGEN EXCHANGER"/>
    <property type="match status" value="1"/>
</dbReference>
<dbReference type="PANTHER" id="PTHR10110:SF59">
    <property type="entry name" value="SODIUM_HYDROGEN EXCHANGER 1"/>
    <property type="match status" value="1"/>
</dbReference>
<dbReference type="Pfam" id="PF00999">
    <property type="entry name" value="Na_H_Exchanger"/>
    <property type="match status" value="1"/>
</dbReference>
<dbReference type="Pfam" id="PF16644">
    <property type="entry name" value="NEXCaM_BD"/>
    <property type="match status" value="1"/>
</dbReference>
<dbReference type="PRINTS" id="PR01084">
    <property type="entry name" value="NAHEXCHNGR"/>
</dbReference>
<dbReference type="PRINTS" id="PR01085">
    <property type="entry name" value="NAHEXCHNGR1"/>
</dbReference>
<comment type="function">
    <text evidence="2 3">Electroneutral Na(+) /H(+) antiporter that extrudes Na(+) in exchange for external protons driven by the inward sodium ion chemical gradient, protecting cells from acidification that occurs from metabolism (By similarity). Exchanges intracellular H(+) ions for extracellular Na(+) in 1:1 stoichiometry (By similarity). Plays a key role in maintening intracellular pH neutral and cell volume, and thus is important for cell growth, proliferation, migration and survival. In addition, can transport lithium Li(+) and also functions as a Na(+)/Li(+) antiporter. SLC9A1 also functions in membrane anchoring and organization of scaffolding complexes that coordinate signaling inputs (By similarity).</text>
</comment>
<comment type="catalytic activity">
    <reaction evidence="2">
        <text>Na(+)(in) + H(+)(out) = Na(+)(out) + H(+)(in)</text>
        <dbReference type="Rhea" id="RHEA:29419"/>
        <dbReference type="ChEBI" id="CHEBI:15378"/>
        <dbReference type="ChEBI" id="CHEBI:29101"/>
    </reaction>
</comment>
<comment type="catalytic activity">
    <reaction evidence="2">
        <text>Li(+)(out) + H(+)(in) = Li(+)(in) + H(+)(out)</text>
        <dbReference type="Rhea" id="RHEA:72407"/>
        <dbReference type="ChEBI" id="CHEBI:15378"/>
        <dbReference type="ChEBI" id="CHEBI:49713"/>
    </reaction>
</comment>
<comment type="catalytic activity">
    <reaction evidence="2">
        <text>Li(+)(in) + Na(+)(out) = Li(+)(out) + Na(+)(in)</text>
        <dbReference type="Rhea" id="RHEA:72415"/>
        <dbReference type="ChEBI" id="CHEBI:29101"/>
        <dbReference type="ChEBI" id="CHEBI:49713"/>
    </reaction>
</comment>
<comment type="activity regulation">
    <text evidence="2">Activated at acidic pHs. Inhibited by amiloride and 5-amino-substituted derivatives. Inhibited by cariporide and eniporide. Phosphatidylinositol 4,5-bisphosphate (PI(4,5)P2) and phosphatidylinositol 3,4,5-trisphosphate (PI(3,4,5)P3) bind and differentially regulate SLC9A1 activity.</text>
</comment>
<comment type="subunit">
    <text evidence="2 3">Homodimer; dimerization is crucial for its function (By similarity). Oligomer (By similarity). Interacts with CALM in a calcium-dependent manner (By similarity). Interacts with TESC (By similarity). Interacts (via the juxtamembrane region of the cytoplasmic C-terminal domain) with CHP1; the interaction occurs at the plasma membrane in a calcium-dependent manner (By similarity). Interacts with CHP2; the interaction occurs in a calcium-dependent manner (By similarity). Interacts with EZR; regulates the cytoskeletal interactions of SLC9A1 and promotes stress fiber formation (By similarity).</text>
</comment>
<comment type="subcellular location">
    <subcellularLocation>
        <location evidence="2">Cell membrane</location>
        <topology evidence="2">Multi-pass membrane protein</topology>
    </subcellularLocation>
    <subcellularLocation>
        <location evidence="4">Basolateral cell membrane</location>
        <topology evidence="2">Multi-pass membrane protein</topology>
    </subcellularLocation>
</comment>
<comment type="PTM">
    <text evidence="3">Ubiquitinated, leading to its degradation by the proteasome. Ubiquitination is reduced by CHP1.</text>
</comment>
<comment type="PTM">
    <text evidence="2">O-glycosylated.</text>
</comment>
<comment type="PTM">
    <text evidence="3">Palmitoylated; may play a major role in SLC9A1 regulation.</text>
</comment>
<comment type="PTM">
    <text evidence="2">Phosphorylation at Thr-782 increases SLC9A1 activity. Specifically dephosphorylated at Thr-782 by PPP3CA that negatively regulates SLC9A1 activity. Phosphorylation at Ser-648 by AKT1 reduces SLC9A1 binding to CALM1.</text>
</comment>
<comment type="miscellaneous">
    <text evidence="2">Predicted models used for more than 20 years predicted 10-12 transmembrane segments. More recently, the structure of SLC9A1 has been solved and reveals that SLC9A1 possesses 13 transmembrane regions.</text>
</comment>
<comment type="similarity">
    <text evidence="8">Belongs to the monovalent cation:proton antiporter 1 (CPA1) transporter (TC 2.A.36) family.</text>
</comment>
<comment type="caution">
    <text evidence="8">The interacting region with TESC is conflicting: In human, it has been reported that SLC9A1 interacts with TESC via the juxtamembrane region of the cytoplasmic C-terminal domain, including residues 503-545. However, another publication has reported interaction with TESC via residues 633-817, the region of the cytoplasmic C-terminus more distal to the membrane.</text>
</comment>
<protein>
    <recommendedName>
        <fullName>Sodium/hydrogen exchanger 1</fullName>
    </recommendedName>
    <alternativeName>
        <fullName>Na(+)/H(+) exchanger 1</fullName>
        <shortName>NHE-1</shortName>
    </alternativeName>
    <alternativeName>
        <fullName>Solute carrier family 9 member 1</fullName>
    </alternativeName>
</protein>
<sequence>MLLWPGASGLPPPRIFPSLLVVVALVGLLPVLRSYGLQISPTASTIRGSEPPRERSIGDVTTAPPELAPESRPVNHSFAEHSPKARKAFPVLGIDYQHVRIPFEIALWILLACLMKIGFHVIPTISSIVPESCLLIVVGLLVGGLIKGVGETPPILQSEVFFLFLLPPIILDAGYFLPLRQFTENLGTILIFAVVGTLWNAFFLGGLMYAVCLVGGEQINNIGLLENLLFGSIISAVDPVAVLAVFEEIHINELLHILVFGESLLNDAVTVVLYHLFEEFANYDRVGIVDIILGFLSFFVVSLGGVFVGVVYGVIAAFTSRFTSHIRVIEPLFVFLYSYMAYLSAELFHLSGIMALIASGVVMRPYVEANISHKSHTTIKYFLKMWSSVSETLIFIFLGVSTVAGSHHWNWTFVISTLLFCLIARVLGVLGLTWFINKFRIVKLTPKDQFIIAYGGLRGAIAFSLGYLLDKKHFPMCDLFLTAIITVIFFTVFVQGMTIRPLVDLLAVKKKQETKRSINEEIHTQFLDHLLTGIEDICGHYGHHHWKDKLNRFNKKYVKKCLIAGERSKEPQLIAFYHKMEMKQAIELVESGGMGKIPSAVSTVSMQNIHPKSLPAERILPALSKDKEEEIRKILRNNLQKTRQRLRSYNRHTLVADPYEEAWNQMLLRRQKARQLEQKISNYLTVPAHKLDSPTMSRARIGSDPLAYEPKADLPVITIDPASPQSPESVDLVNEELKGKVLGLSRDPGRLAEEEEDDKDPDGGLTMRTKEPSSPGTDDVFTPAPSDSPSSQRIQRCLSDPGPHPEPGEGEPFIPKGQ</sequence>
<gene>
    <name type="primary">SLC9A1</name>
    <name type="synonym">NHE1</name>
</gene>
<accession>Q28036</accession>
<accession>F1MHK2</accession>
<feature type="chain" id="PRO_0000052345" description="Sodium/hydrogen exchanger 1">
    <location>
        <begin position="1"/>
        <end position="818"/>
    </location>
</feature>
<feature type="topological domain" description="Extracellular" evidence="8">
    <location>
        <begin position="1"/>
        <end position="98"/>
    </location>
</feature>
<feature type="transmembrane region" description="Helical; Name=1" evidence="2">
    <location>
        <begin position="99"/>
        <end position="121"/>
    </location>
</feature>
<feature type="topological domain" description="Cytoplasmic" evidence="8">
    <location>
        <begin position="122"/>
        <end position="130"/>
    </location>
</feature>
<feature type="transmembrane region" description="Helical; Name=2" evidence="2">
    <location>
        <begin position="131"/>
        <end position="148"/>
    </location>
</feature>
<feature type="topological domain" description="Extracellular" evidence="8">
    <location>
        <begin position="149"/>
        <end position="158"/>
    </location>
</feature>
<feature type="transmembrane region" description="Helical; Name=3" evidence="2">
    <location>
        <begin position="159"/>
        <end position="176"/>
    </location>
</feature>
<feature type="topological domain" description="Cytoplasmic" evidence="8">
    <location>
        <begin position="177"/>
        <end position="186"/>
    </location>
</feature>
<feature type="transmembrane region" description="Helical; Name=4" evidence="2">
    <location>
        <begin position="187"/>
        <end position="215"/>
    </location>
</feature>
<feature type="topological domain" description="Extracellular" evidence="8">
    <location>
        <begin position="216"/>
        <end position="222"/>
    </location>
</feature>
<feature type="transmembrane region" description="Helical; Name=5" evidence="2">
    <location>
        <begin position="223"/>
        <end position="249"/>
    </location>
</feature>
<feature type="topological domain" description="Cytoplasmic" evidence="8">
    <location>
        <begin position="250"/>
        <end position="252"/>
    </location>
</feature>
<feature type="transmembrane region" description="Helical; Name=6" evidence="2">
    <location>
        <begin position="253"/>
        <end position="283"/>
    </location>
</feature>
<feature type="topological domain" description="Extracellular" evidence="8">
    <location>
        <begin position="284"/>
        <end position="287"/>
    </location>
</feature>
<feature type="transmembrane region" description="Helical; Name=7" evidence="2">
    <location>
        <begin position="288"/>
        <end position="322"/>
    </location>
</feature>
<feature type="topological domain" description="Cytoplasmic" evidence="8">
    <location>
        <begin position="323"/>
        <end position="328"/>
    </location>
</feature>
<feature type="transmembrane region" description="Helical; Name=8" evidence="2">
    <location>
        <begin position="329"/>
        <end position="341"/>
    </location>
</feature>
<feature type="topological domain" description="Extracellular" evidence="8">
    <location>
        <begin position="342"/>
        <end position="350"/>
    </location>
</feature>
<feature type="transmembrane region" description="Helical; Name=9" evidence="2">
    <location>
        <begin position="351"/>
        <end position="371"/>
    </location>
</feature>
<feature type="topological domain" description="Cytoplasmic" evidence="8">
    <location>
        <begin position="372"/>
        <end position="373"/>
    </location>
</feature>
<feature type="transmembrane region" description="Helical; Name=10" evidence="2">
    <location>
        <begin position="374"/>
        <end position="404"/>
    </location>
</feature>
<feature type="topological domain" description="Extracellular" evidence="8">
    <location>
        <begin position="405"/>
        <end position="410"/>
    </location>
</feature>
<feature type="transmembrane region" description="Helical; Name=11" evidence="2">
    <location>
        <begin position="411"/>
        <end position="438"/>
    </location>
</feature>
<feature type="topological domain" description="Cytoplasmic" evidence="8">
    <location>
        <begin position="439"/>
        <end position="444"/>
    </location>
</feature>
<feature type="transmembrane region" description="Helical; Name=12" evidence="2">
    <location>
        <begin position="445"/>
        <end position="469"/>
    </location>
</feature>
<feature type="topological domain" description="Extracellular" evidence="8">
    <location>
        <begin position="470"/>
        <end position="475"/>
    </location>
</feature>
<feature type="transmembrane region" description="Helical; Name=13" evidence="2">
    <location>
        <begin position="476"/>
        <end position="505"/>
    </location>
</feature>
<feature type="topological domain" description="Cytoplasmic" evidence="8">
    <location>
        <begin position="506"/>
        <end position="818"/>
    </location>
</feature>
<feature type="region of interest" description="Disordered" evidence="7">
    <location>
        <begin position="44"/>
        <end position="76"/>
    </location>
</feature>
<feature type="region of interest" description="Interaction with TESC" evidence="2">
    <location>
        <begin position="503"/>
        <end position="545"/>
    </location>
</feature>
<feature type="region of interest" description="PI(4,5)P2-binding region" evidence="3">
    <location>
        <begin position="509"/>
        <end position="516"/>
    </location>
</feature>
<feature type="region of interest" description="Interaction with CHP2" evidence="2">
    <location>
        <begin position="515"/>
        <end position="545"/>
    </location>
</feature>
<feature type="region of interest" description="Confers pH-dependent PI(4,5)P2 binding" evidence="2">
    <location>
        <begin position="540"/>
        <end position="545"/>
    </location>
</feature>
<feature type="region of interest" description="PI(4,5)P2-binding region" evidence="3">
    <location>
        <begin position="552"/>
        <end position="560"/>
    </location>
</feature>
<feature type="region of interest" description="Interaction with CALM1" evidence="2">
    <location>
        <begin position="633"/>
        <end position="818"/>
    </location>
</feature>
<feature type="region of interest" description="Interaction with TESC" evidence="2">
    <location>
        <begin position="633"/>
        <end position="818"/>
    </location>
</feature>
<feature type="region of interest" description="Interaction with PPP3CA" evidence="2">
    <location>
        <begin position="684"/>
        <end position="687"/>
    </location>
</feature>
<feature type="region of interest" description="Interaction with PPP3CA" evidence="2">
    <location>
        <begin position="715"/>
        <end position="720"/>
    </location>
</feature>
<feature type="region of interest" description="Disordered" evidence="7">
    <location>
        <begin position="741"/>
        <end position="818"/>
    </location>
</feature>
<feature type="compositionally biased region" description="Polar residues" evidence="7">
    <location>
        <begin position="785"/>
        <end position="794"/>
    </location>
</feature>
<feature type="site" description="Channel pore-lining" evidence="1">
    <location>
        <position position="161"/>
    </location>
</feature>
<feature type="modified residue" description="Phosphoserine" evidence="2">
    <location>
        <position position="599"/>
    </location>
</feature>
<feature type="modified residue" description="Phosphoserine" evidence="2">
    <location>
        <position position="602"/>
    </location>
</feature>
<feature type="modified residue" description="Phosphothreonine" evidence="5">
    <location>
        <position position="603"/>
    </location>
</feature>
<feature type="modified residue" description="Phosphoserine" evidence="2">
    <location>
        <position position="605"/>
    </location>
</feature>
<feature type="modified residue" description="Phosphoserine" evidence="2">
    <location>
        <position position="648"/>
    </location>
</feature>
<feature type="modified residue" description="Phosphoserine" evidence="2">
    <location>
        <position position="693"/>
    </location>
</feature>
<feature type="modified residue" description="Phosphoserine" evidence="2">
    <location>
        <position position="697"/>
    </location>
</feature>
<feature type="modified residue" description="Phosphoserine" evidence="2">
    <location>
        <position position="703"/>
    </location>
</feature>
<feature type="modified residue" description="Phosphoserine" evidence="2">
    <location>
        <position position="723"/>
    </location>
</feature>
<feature type="modified residue" description="Phosphoserine" evidence="2">
    <location>
        <position position="726"/>
    </location>
</feature>
<feature type="modified residue" description="Phosphoserine" evidence="2">
    <location>
        <position position="729"/>
    </location>
</feature>
<feature type="modified residue" description="Phosphothreonine" evidence="2">
    <location>
        <position position="782"/>
    </location>
</feature>
<feature type="modified residue" description="Phosphoserine" evidence="2">
    <location>
        <position position="788"/>
    </location>
</feature>
<feature type="modified residue" description="Phosphoserine" evidence="5">
    <location>
        <position position="790"/>
    </location>
</feature>
<feature type="modified residue" description="Phosphoserine" evidence="3">
    <location>
        <position position="799"/>
    </location>
</feature>
<feature type="glycosylation site" description="N-linked (GlcNAc...) asparagine" evidence="6">
    <location>
        <position position="75"/>
    </location>
</feature>
<feature type="sequence conflict" description="In Ref. 1; AAA91483." evidence="8" ref="1">
    <original>KDPDGG</original>
    <variation>NGPRW</variation>
    <location>
        <begin position="759"/>
        <end position="764"/>
    </location>
</feature>
<organism>
    <name type="scientific">Bos taurus</name>
    <name type="common">Bovine</name>
    <dbReference type="NCBI Taxonomy" id="9913"/>
    <lineage>
        <taxon>Eukaryota</taxon>
        <taxon>Metazoa</taxon>
        <taxon>Chordata</taxon>
        <taxon>Craniata</taxon>
        <taxon>Vertebrata</taxon>
        <taxon>Euteleostomi</taxon>
        <taxon>Mammalia</taxon>
        <taxon>Eutheria</taxon>
        <taxon>Laurasiatheria</taxon>
        <taxon>Artiodactyla</taxon>
        <taxon>Ruminantia</taxon>
        <taxon>Pecora</taxon>
        <taxon>Bovidae</taxon>
        <taxon>Bovinae</taxon>
        <taxon>Bos</taxon>
    </lineage>
</organism>
<evidence type="ECO:0000250" key="1"/>
<evidence type="ECO:0000250" key="2">
    <source>
        <dbReference type="UniProtKB" id="P19634"/>
    </source>
</evidence>
<evidence type="ECO:0000250" key="3">
    <source>
        <dbReference type="UniProtKB" id="P26431"/>
    </source>
</evidence>
<evidence type="ECO:0000250" key="4">
    <source>
        <dbReference type="UniProtKB" id="P48762"/>
    </source>
</evidence>
<evidence type="ECO:0000250" key="5">
    <source>
        <dbReference type="UniProtKB" id="Q61165"/>
    </source>
</evidence>
<evidence type="ECO:0000255" key="6"/>
<evidence type="ECO:0000256" key="7">
    <source>
        <dbReference type="SAM" id="MobiDB-lite"/>
    </source>
</evidence>
<evidence type="ECO:0000305" key="8"/>
<reference key="1">
    <citation type="submission" date="1996-03" db="EMBL/GenBank/DDBJ databases">
        <title>Molecular cloning and characterization of Na+/H+ antiporter from Bovine heart.</title>
        <authorList>
            <person name="Zhu H."/>
            <person name="Zhang Q."/>
            <person name="Zhang X."/>
            <person name="Liu W."/>
            <person name="Trumbly R.J."/>
            <person name="Garlid K.D."/>
            <person name="Sun X."/>
        </authorList>
    </citation>
    <scope>NUCLEOTIDE SEQUENCE [MRNA]</scope>
    <source>
        <tissue>Heart</tissue>
    </source>
</reference>
<reference key="2">
    <citation type="journal article" date="2009" name="Genome Biol.">
        <title>A whole-genome assembly of the domestic cow, Bos taurus.</title>
        <authorList>
            <person name="Zimin A.V."/>
            <person name="Delcher A.L."/>
            <person name="Florea L."/>
            <person name="Kelley D.R."/>
            <person name="Schatz M.C."/>
            <person name="Puiu D."/>
            <person name="Hanrahan F."/>
            <person name="Pertea G."/>
            <person name="Van Tassell C.P."/>
            <person name="Sonstegard T.S."/>
            <person name="Marcais G."/>
            <person name="Roberts M."/>
            <person name="Subramanian P."/>
            <person name="Yorke J.A."/>
            <person name="Salzberg S.L."/>
        </authorList>
    </citation>
    <scope>NUCLEOTIDE SEQUENCE [LARGE SCALE GENOMIC DNA]</scope>
    <source>
        <strain>Hereford</strain>
    </source>
</reference>
<proteinExistence type="evidence at transcript level"/>
<name>SL9A1_BOVIN</name>